<keyword id="KW-0067">ATP-binding</keyword>
<keyword id="KW-0113">Calvin cycle</keyword>
<keyword id="KW-0418">Kinase</keyword>
<keyword id="KW-0547">Nucleotide-binding</keyword>
<keyword id="KW-0614">Plasmid</keyword>
<keyword id="KW-1185">Reference proteome</keyword>
<keyword id="KW-0808">Transferase</keyword>
<organism>
    <name type="scientific">Rhizobium meliloti (strain 1021)</name>
    <name type="common">Ensifer meliloti</name>
    <name type="synonym">Sinorhizobium meliloti</name>
    <dbReference type="NCBI Taxonomy" id="266834"/>
    <lineage>
        <taxon>Bacteria</taxon>
        <taxon>Pseudomonadati</taxon>
        <taxon>Pseudomonadota</taxon>
        <taxon>Alphaproteobacteria</taxon>
        <taxon>Hyphomicrobiales</taxon>
        <taxon>Rhizobiaceae</taxon>
        <taxon>Sinorhizobium/Ensifer group</taxon>
        <taxon>Sinorhizobium</taxon>
    </lineage>
</organism>
<accession>P58347</accession>
<sequence length="289" mass="32886">MSAKFPIISITGSSGAGTTTVKDTFEKIFKRENISASFIEGDAFHRFDRETMRSKIAEEKARGVDFTHFSAEANELEILESVFAEYGRRGVGRTRHYVHDEAEAAKFGSDPGTFTDWEEFRDSDLLFYEGLHGCAVTDTVNLAQHCDLKIGVVPVINLEWIQKIHRDKATRGYSTEAVTDTILRRMPDYVNYICPQFSLTDINFQRVPIVDTSNPFIARWIPTPAESILVIRFAKPQSIDFPYLLSMLHNSYMSRANSIVVPGDKLDLAMQLIFTPLIHKLLERKHRMS</sequence>
<proteinExistence type="inferred from homology"/>
<evidence type="ECO:0000250" key="1"/>
<evidence type="ECO:0000305" key="2"/>
<name>KPPR_RHIME</name>
<reference key="1">
    <citation type="journal article" date="2001" name="Proc. Natl. Acad. Sci. U.S.A.">
        <title>The complete sequence of the 1,683-kb pSymB megaplasmid from the N2-fixing endosymbiont Sinorhizobium meliloti.</title>
        <authorList>
            <person name="Finan T.M."/>
            <person name="Weidner S."/>
            <person name="Wong K."/>
            <person name="Buhrmester J."/>
            <person name="Chain P."/>
            <person name="Vorhoelter F.J."/>
            <person name="Hernandez-Lucas I."/>
            <person name="Becker A."/>
            <person name="Cowie A."/>
            <person name="Gouzy J."/>
            <person name="Golding B."/>
            <person name="Puehler A."/>
        </authorList>
    </citation>
    <scope>NUCLEOTIDE SEQUENCE [LARGE SCALE GENOMIC DNA]</scope>
    <source>
        <strain>1021</strain>
    </source>
</reference>
<reference key="2">
    <citation type="journal article" date="2001" name="Science">
        <title>The composite genome of the legume symbiont Sinorhizobium meliloti.</title>
        <authorList>
            <person name="Galibert F."/>
            <person name="Finan T.M."/>
            <person name="Long S.R."/>
            <person name="Puehler A."/>
            <person name="Abola P."/>
            <person name="Ampe F."/>
            <person name="Barloy-Hubler F."/>
            <person name="Barnett M.J."/>
            <person name="Becker A."/>
            <person name="Boistard P."/>
            <person name="Bothe G."/>
            <person name="Boutry M."/>
            <person name="Bowser L."/>
            <person name="Buhrmester J."/>
            <person name="Cadieu E."/>
            <person name="Capela D."/>
            <person name="Chain P."/>
            <person name="Cowie A."/>
            <person name="Davis R.W."/>
            <person name="Dreano S."/>
            <person name="Federspiel N.A."/>
            <person name="Fisher R.F."/>
            <person name="Gloux S."/>
            <person name="Godrie T."/>
            <person name="Goffeau A."/>
            <person name="Golding B."/>
            <person name="Gouzy J."/>
            <person name="Gurjal M."/>
            <person name="Hernandez-Lucas I."/>
            <person name="Hong A."/>
            <person name="Huizar L."/>
            <person name="Hyman R.W."/>
            <person name="Jones T."/>
            <person name="Kahn D."/>
            <person name="Kahn M.L."/>
            <person name="Kalman S."/>
            <person name="Keating D.H."/>
            <person name="Kiss E."/>
            <person name="Komp C."/>
            <person name="Lelaure V."/>
            <person name="Masuy D."/>
            <person name="Palm C."/>
            <person name="Peck M.C."/>
            <person name="Pohl T.M."/>
            <person name="Portetelle D."/>
            <person name="Purnelle B."/>
            <person name="Ramsperger U."/>
            <person name="Surzycki R."/>
            <person name="Thebault P."/>
            <person name="Vandenbol M."/>
            <person name="Vorhoelter F.J."/>
            <person name="Weidner S."/>
            <person name="Wells D.H."/>
            <person name="Wong K."/>
            <person name="Yeh K.-C."/>
            <person name="Batut J."/>
        </authorList>
    </citation>
    <scope>NUCLEOTIDE SEQUENCE [LARGE SCALE GENOMIC DNA]</scope>
    <source>
        <strain>1021</strain>
    </source>
</reference>
<comment type="catalytic activity">
    <reaction>
        <text>D-ribulose 5-phosphate + ATP = D-ribulose 1,5-bisphosphate + ADP + H(+)</text>
        <dbReference type="Rhea" id="RHEA:19365"/>
        <dbReference type="ChEBI" id="CHEBI:15378"/>
        <dbReference type="ChEBI" id="CHEBI:30616"/>
        <dbReference type="ChEBI" id="CHEBI:57870"/>
        <dbReference type="ChEBI" id="CHEBI:58121"/>
        <dbReference type="ChEBI" id="CHEBI:456216"/>
        <dbReference type="EC" id="2.7.1.19"/>
    </reaction>
</comment>
<comment type="pathway">
    <text>Carbohydrate biosynthesis; Calvin cycle.</text>
</comment>
<comment type="similarity">
    <text evidence="2">Belongs to the phosphoribulokinase family.</text>
</comment>
<dbReference type="EC" id="2.7.1.19"/>
<dbReference type="EMBL" id="AL591985">
    <property type="protein sequence ID" value="CAC48594.1"/>
    <property type="molecule type" value="Genomic_DNA"/>
</dbReference>
<dbReference type="PIR" id="B95866">
    <property type="entry name" value="B95866"/>
</dbReference>
<dbReference type="RefSeq" id="NP_436734.1">
    <property type="nucleotide sequence ID" value="NC_003078.1"/>
</dbReference>
<dbReference type="RefSeq" id="WP_003528721.1">
    <property type="nucleotide sequence ID" value="NC_003078.1"/>
</dbReference>
<dbReference type="SMR" id="P58347"/>
<dbReference type="EnsemblBacteria" id="CAC48594">
    <property type="protein sequence ID" value="CAC48594"/>
    <property type="gene ID" value="SM_b20201"/>
</dbReference>
<dbReference type="KEGG" id="sme:SM_b20201"/>
<dbReference type="PATRIC" id="fig|266834.11.peg.5110"/>
<dbReference type="eggNOG" id="COG3954">
    <property type="taxonomic scope" value="Bacteria"/>
</dbReference>
<dbReference type="HOGENOM" id="CLU_962223_0_0_5"/>
<dbReference type="OrthoDB" id="9773443at2"/>
<dbReference type="UniPathway" id="UPA00116"/>
<dbReference type="PRO" id="PR:P58347"/>
<dbReference type="Proteomes" id="UP000001976">
    <property type="component" value="Plasmid pSymB"/>
</dbReference>
<dbReference type="GO" id="GO:0005524">
    <property type="term" value="F:ATP binding"/>
    <property type="evidence" value="ECO:0007669"/>
    <property type="project" value="UniProtKB-KW"/>
</dbReference>
<dbReference type="GO" id="GO:0008974">
    <property type="term" value="F:phosphoribulokinase activity"/>
    <property type="evidence" value="ECO:0007669"/>
    <property type="project" value="UniProtKB-EC"/>
</dbReference>
<dbReference type="GO" id="GO:0019253">
    <property type="term" value="P:reductive pentose-phosphate cycle"/>
    <property type="evidence" value="ECO:0007669"/>
    <property type="project" value="UniProtKB-UniPathway"/>
</dbReference>
<dbReference type="Gene3D" id="3.40.50.300">
    <property type="entry name" value="P-loop containing nucleotide triphosphate hydrolases"/>
    <property type="match status" value="1"/>
</dbReference>
<dbReference type="InterPro" id="IPR027417">
    <property type="entry name" value="P-loop_NTPase"/>
</dbReference>
<dbReference type="InterPro" id="IPR006082">
    <property type="entry name" value="PRK"/>
</dbReference>
<dbReference type="InterPro" id="IPR006083">
    <property type="entry name" value="PRK/URK"/>
</dbReference>
<dbReference type="NCBIfam" id="NF011997">
    <property type="entry name" value="PRK15453.1"/>
    <property type="match status" value="1"/>
</dbReference>
<dbReference type="Pfam" id="PF00485">
    <property type="entry name" value="PRK"/>
    <property type="match status" value="1"/>
</dbReference>
<dbReference type="PRINTS" id="PR00478">
    <property type="entry name" value="PHRIBLKINASE"/>
</dbReference>
<dbReference type="SUPFAM" id="SSF52540">
    <property type="entry name" value="P-loop containing nucleoside triphosphate hydrolases"/>
    <property type="match status" value="1"/>
</dbReference>
<dbReference type="PROSITE" id="PS00567">
    <property type="entry name" value="PHOSPHORIBULOKINASE"/>
    <property type="match status" value="1"/>
</dbReference>
<protein>
    <recommendedName>
        <fullName>Phosphoribulokinase</fullName>
        <shortName>PRK</shortName>
        <shortName>PRKase</shortName>
        <ecNumber>2.7.1.19</ecNumber>
    </recommendedName>
    <alternativeName>
        <fullName>Phosphopentokinase</fullName>
    </alternativeName>
</protein>
<gene>
    <name type="primary">cbbP</name>
    <name type="ordered locus">RB0194</name>
    <name type="ORF">SMb20201</name>
</gene>
<geneLocation type="plasmid">
    <name>pSymB</name>
    <name>megaplasmid 2</name>
</geneLocation>
<feature type="chain" id="PRO_0000201955" description="Phosphoribulokinase">
    <location>
        <begin position="1"/>
        <end position="289"/>
    </location>
</feature>
<feature type="binding site" evidence="1">
    <location>
        <begin position="12"/>
        <end position="20"/>
    </location>
    <ligand>
        <name>ATP</name>
        <dbReference type="ChEBI" id="CHEBI:30616"/>
    </ligand>
</feature>